<feature type="chain" id="PRO_0000438819" description="PAK4-inhibitor inka2">
    <location>
        <begin position="1"/>
        <end position="316"/>
    </location>
</feature>
<feature type="region of interest" description="Disordered" evidence="3">
    <location>
        <begin position="43"/>
        <end position="74"/>
    </location>
</feature>
<feature type="region of interest" description="Disordered" evidence="3">
    <location>
        <begin position="108"/>
        <end position="130"/>
    </location>
</feature>
<feature type="region of interest" description="Inka box" evidence="1">
    <location>
        <begin position="182"/>
        <end position="219"/>
    </location>
</feature>
<feature type="compositionally biased region" description="Basic and acidic residues" evidence="3">
    <location>
        <begin position="65"/>
        <end position="74"/>
    </location>
</feature>
<feature type="compositionally biased region" description="Acidic residues" evidence="3">
    <location>
        <begin position="119"/>
        <end position="129"/>
    </location>
</feature>
<accession>A0FGR0</accession>
<accession>A1L3J3</accession>
<proteinExistence type="evidence at transcript level"/>
<dbReference type="EMBL" id="DQ993180">
    <property type="protein sequence ID" value="ABJ97521.1"/>
    <property type="molecule type" value="mRNA"/>
</dbReference>
<dbReference type="EMBL" id="BC130131">
    <property type="protein sequence ID" value="AAI30132.1"/>
    <property type="molecule type" value="mRNA"/>
</dbReference>
<dbReference type="EMBL" id="BC169645">
    <property type="protein sequence ID" value="AAI69645.1"/>
    <property type="molecule type" value="mRNA"/>
</dbReference>
<dbReference type="EMBL" id="BC169647">
    <property type="protein sequence ID" value="AAI69647.1"/>
    <property type="molecule type" value="mRNA"/>
</dbReference>
<dbReference type="GeneID" id="779095"/>
<dbReference type="KEGG" id="xla:779095"/>
<dbReference type="AGR" id="Xenbase:XB-GENE-866067"/>
<dbReference type="CTD" id="779095"/>
<dbReference type="Xenbase" id="XB-GENE-866067">
    <property type="gene designation" value="inka1.L"/>
</dbReference>
<dbReference type="OrthoDB" id="8811265at2759"/>
<dbReference type="Proteomes" id="UP000186698">
    <property type="component" value="Chromosome 4L"/>
</dbReference>
<dbReference type="Bgee" id="779095">
    <property type="expression patterns" value="Expressed in neurula embryo and 18 other cell types or tissues"/>
</dbReference>
<dbReference type="GO" id="GO:0005634">
    <property type="term" value="C:nucleus"/>
    <property type="evidence" value="ECO:0000250"/>
    <property type="project" value="UniProtKB"/>
</dbReference>
<dbReference type="GO" id="GO:0019901">
    <property type="term" value="F:protein kinase binding"/>
    <property type="evidence" value="ECO:0000318"/>
    <property type="project" value="GO_Central"/>
</dbReference>
<dbReference type="GO" id="GO:0030291">
    <property type="term" value="F:protein serine/threonine kinase inhibitor activity"/>
    <property type="evidence" value="ECO:0000250"/>
    <property type="project" value="UniProtKB"/>
</dbReference>
<dbReference type="FunFam" id="3.30.200.20:FF:000995">
    <property type="entry name" value="PAK4-inhibitor inka2"/>
    <property type="match status" value="1"/>
</dbReference>
<dbReference type="Gene3D" id="3.30.200.20">
    <property type="entry name" value="Phosphorylase Kinase, domain 1"/>
    <property type="match status" value="1"/>
</dbReference>
<dbReference type="InterPro" id="IPR029267">
    <property type="entry name" value="FAM212"/>
</dbReference>
<dbReference type="InterPro" id="IPR039201">
    <property type="entry name" value="Inka"/>
</dbReference>
<dbReference type="PANTHER" id="PTHR28615:SF1">
    <property type="entry name" value="PAK4-INHIBITOR INKA1"/>
    <property type="match status" value="1"/>
</dbReference>
<dbReference type="PANTHER" id="PTHR28615">
    <property type="entry name" value="PAK4-INHIBITOR INKA1-RELATED"/>
    <property type="match status" value="1"/>
</dbReference>
<dbReference type="Pfam" id="PF15342">
    <property type="entry name" value="FAM212"/>
    <property type="match status" value="1"/>
</dbReference>
<sequence length="316" mass="35163">MHKSHLDSVAPQLRSDLQCIKASSSSLCDQMECMLRVLQDFKRSSPPPSPDIEKPCVVPPRRAPRRDNRISHRTSDLSEADSACCMDLPSDVSPGSCGQRGLEWDSGYSEVSGGSLRGEEDDIVEEESETSVPTVVLRRLPTPSCQRLSSGGFLNSRQGRIRPKSTSDVCLEQWRGIGLGSDSQDWTGCLLSQSRSRQPLVLGDNSFADLVKQWMDLPENVDEEGRRVRDGGRWLHKPHGFLISLSGNVKRRLGNMSRLRRSEQEAVKRMSCPQLGCRPLSLYYHQSLSDIAEASTNLLHCRSRQPIICNEGAGFL</sequence>
<comment type="function">
    <text evidence="1">Inhibitor of the serine/threonine-protein kinase pak4/pak5. Acts by binding pak4/pak5 in a substrate-like manner, inhibiting the protein kinase activity.</text>
</comment>
<comment type="subcellular location">
    <subcellularLocation>
        <location evidence="2">Nucleus</location>
    </subcellularLocation>
</comment>
<comment type="domain">
    <text evidence="1">The Inka box (also named iBox or inca box) binds and inhibits PAK4 by binding a substrate-like manner.</text>
</comment>
<comment type="similarity">
    <text evidence="5">Belongs to the INKA family.</text>
</comment>
<name>IKA1B_XENLA</name>
<protein>
    <recommendedName>
        <fullName evidence="5">PAK4-inhibitor inka2</fullName>
    </recommendedName>
    <alternativeName>
        <fullName evidence="4">Induced in neural crest by AP2-alpha protein B</fullName>
        <shortName evidence="4">IncaB</shortName>
    </alternativeName>
</protein>
<evidence type="ECO:0000250" key="1">
    <source>
        <dbReference type="UniProtKB" id="Q96EL1"/>
    </source>
</evidence>
<evidence type="ECO:0000250" key="2">
    <source>
        <dbReference type="UniProtKB" id="Q9NTI7"/>
    </source>
</evidence>
<evidence type="ECO:0000256" key="3">
    <source>
        <dbReference type="SAM" id="MobiDB-lite"/>
    </source>
</evidence>
<evidence type="ECO:0000303" key="4">
    <source>
    </source>
</evidence>
<evidence type="ECO:0000305" key="5"/>
<evidence type="ECO:0000312" key="6">
    <source>
        <dbReference type="EMBL" id="ABJ97521.1"/>
    </source>
</evidence>
<keyword id="KW-0539">Nucleus</keyword>
<keyword id="KW-1185">Reference proteome</keyword>
<reference key="1">
    <citation type="journal article" date="2007" name="Development">
        <title>Inca: a novel p21-activated kinase-associated protein required for cranial neural crest development.</title>
        <authorList>
            <person name="Luo T."/>
            <person name="Xu Y."/>
            <person name="Hoffman T.L."/>
            <person name="Zhang T."/>
            <person name="Schilling T."/>
            <person name="Sargent T.D."/>
        </authorList>
    </citation>
    <scope>NUCLEOTIDE SEQUENCE [MRNA]</scope>
</reference>
<reference key="2">
    <citation type="submission" date="2008-11" db="EMBL/GenBank/DDBJ databases">
        <authorList>
            <consortium name="NIH - Xenopus Gene Collection (XGC) project"/>
        </authorList>
    </citation>
    <scope>NUCLEOTIDE SEQUENCE [LARGE SCALE MRNA]</scope>
    <source>
        <tissue>Gastrula</tissue>
    </source>
</reference>
<gene>
    <name evidence="5" type="primary">inka1-b</name>
    <name type="synonym">fam212a-b</name>
    <name type="synonym">inca-b</name>
    <name evidence="4" type="synonym">incab</name>
    <name evidence="2" type="synonym">inka2</name>
</gene>
<organism evidence="6">
    <name type="scientific">Xenopus laevis</name>
    <name type="common">African clawed frog</name>
    <dbReference type="NCBI Taxonomy" id="8355"/>
    <lineage>
        <taxon>Eukaryota</taxon>
        <taxon>Metazoa</taxon>
        <taxon>Chordata</taxon>
        <taxon>Craniata</taxon>
        <taxon>Vertebrata</taxon>
        <taxon>Euteleostomi</taxon>
        <taxon>Amphibia</taxon>
        <taxon>Batrachia</taxon>
        <taxon>Anura</taxon>
        <taxon>Pipoidea</taxon>
        <taxon>Pipidae</taxon>
        <taxon>Xenopodinae</taxon>
        <taxon>Xenopus</taxon>
        <taxon>Xenopus</taxon>
    </lineage>
</organism>